<comment type="function">
    <text evidence="2">Plays several crucial roles in viral infection. Participates in the opening of the viral DNA origin to initiate replication by interacting with the origin-binding protein. May disrupt loops, hairpins and other secondary structures present on ssDNA to reduce and eliminate pausing of viral DNA polymerase at specific sites during elongation. Promotes viral DNA recombination by performing strand-transfer, characterized by the ability to transfer a DNA strand from a linear duplex to a complementary single-stranded DNA circle. Can also catalyze the renaturation of complementary single strands. Additionally, reorganizes the host cell nucleus, leading to the formation of prereplicative sites and replication compartments. This process is driven by the protein which can form double-helical filaments in the absence of DNA.</text>
</comment>
<comment type="subunit">
    <text evidence="2">Homooligomers. Forms double-helical filaments necessary for the formation of replication compartments within the host nucleus. Interacts with the origin-binding protein. Interacts with the helicase primase complex; this interaction stimulates primer synthesis activity of the helicase-primase complex. Interacts with the DNA polymerase. Interacts with the alkaline exonuclease; this interaction increases its nuclease processivity.</text>
</comment>
<comment type="subcellular location">
    <subcellularLocation>
        <location evidence="1">Virion tegument</location>
    </subcellularLocation>
    <subcellularLocation>
        <location evidence="2">Host nucleus</location>
    </subcellularLocation>
    <text evidence="2">In the absence of DNA replication, found in the nuclear framework-associated structures (prereplicative sites). As viral DNA replication proceeds, it migrates to globular intranuclear structures (replication compartments).</text>
</comment>
<comment type="similarity">
    <text evidence="2">Belongs to the herpesviridae major DNA-binding protein family.</text>
</comment>
<feature type="chain" id="PRO_0000375924" description="Major DNA-binding protein">
    <location>
        <begin position="1"/>
        <end position="1128"/>
    </location>
</feature>
<feature type="region of interest" description="Required for nuclear localization" evidence="2">
    <location>
        <begin position="1104"/>
        <end position="1128"/>
    </location>
</feature>
<name>DNBI_EBVG</name>
<keyword id="KW-0235">DNA replication</keyword>
<keyword id="KW-0238">DNA-binding</keyword>
<keyword id="KW-1048">Host nucleus</keyword>
<keyword id="KW-0946">Virion</keyword>
<keyword id="KW-0920">Virion tegument</keyword>
<evidence type="ECO:0000250" key="1">
    <source>
        <dbReference type="UniProtKB" id="Q8WUF5"/>
    </source>
</evidence>
<evidence type="ECO:0000255" key="2">
    <source>
        <dbReference type="HAMAP-Rule" id="MF_04007"/>
    </source>
</evidence>
<accession>Q3KSN9</accession>
<protein>
    <recommendedName>
        <fullName evidence="2">Major DNA-binding protein</fullName>
    </recommendedName>
</protein>
<gene>
    <name evidence="2" type="primary">DBP</name>
    <name type="ORF">BALF2</name>
</gene>
<dbReference type="EMBL" id="AY961628">
    <property type="protein sequence ID" value="AAY41156.1"/>
    <property type="molecule type" value="Genomic_DNA"/>
</dbReference>
<dbReference type="SMR" id="Q3KSN9"/>
<dbReference type="IntAct" id="Q3KSN9">
    <property type="interactions" value="2"/>
</dbReference>
<dbReference type="Proteomes" id="UP000007641">
    <property type="component" value="Genome"/>
</dbReference>
<dbReference type="GO" id="GO:0042025">
    <property type="term" value="C:host cell nucleus"/>
    <property type="evidence" value="ECO:0007669"/>
    <property type="project" value="UniProtKB-SubCell"/>
</dbReference>
<dbReference type="GO" id="GO:0019033">
    <property type="term" value="C:viral tegument"/>
    <property type="evidence" value="ECO:0007669"/>
    <property type="project" value="UniProtKB-SubCell"/>
</dbReference>
<dbReference type="GO" id="GO:0003697">
    <property type="term" value="F:single-stranded DNA binding"/>
    <property type="evidence" value="ECO:0007669"/>
    <property type="project" value="InterPro"/>
</dbReference>
<dbReference type="GO" id="GO:0006260">
    <property type="term" value="P:DNA replication"/>
    <property type="evidence" value="ECO:0007669"/>
    <property type="project" value="UniProtKB-KW"/>
</dbReference>
<dbReference type="FunFam" id="1.20.190.40:FF:000003">
    <property type="entry name" value="Major DNA-binding protein"/>
    <property type="match status" value="1"/>
</dbReference>
<dbReference type="FunFam" id="1.20.190.40:FF:000004">
    <property type="entry name" value="Major DNA-binding protein"/>
    <property type="match status" value="1"/>
</dbReference>
<dbReference type="Gene3D" id="1.20.190.40">
    <property type="entry name" value="Viral ssDNA binding protein, head domain"/>
    <property type="match status" value="2"/>
</dbReference>
<dbReference type="HAMAP" id="MF_04007">
    <property type="entry name" value="HSV_DNBI"/>
    <property type="match status" value="1"/>
</dbReference>
<dbReference type="InterPro" id="IPR035989">
    <property type="entry name" value="DBP_sf"/>
</dbReference>
<dbReference type="InterPro" id="IPR043031">
    <property type="entry name" value="Viral_ssDBP_head"/>
</dbReference>
<dbReference type="InterPro" id="IPR000635">
    <property type="entry name" value="Viral_ssDNA-bd"/>
</dbReference>
<dbReference type="Pfam" id="PF00747">
    <property type="entry name" value="Viral_DNA_bp"/>
    <property type="match status" value="1"/>
</dbReference>
<dbReference type="SUPFAM" id="SSF118208">
    <property type="entry name" value="Viral ssDNA binding protein"/>
    <property type="match status" value="1"/>
</dbReference>
<organism>
    <name type="scientific">Epstein-Barr virus (strain GD1)</name>
    <name type="common">HHV-4</name>
    <name type="synonym">Human gammaherpesvirus 4</name>
    <dbReference type="NCBI Taxonomy" id="10376"/>
    <lineage>
        <taxon>Viruses</taxon>
        <taxon>Duplodnaviria</taxon>
        <taxon>Heunggongvirae</taxon>
        <taxon>Peploviricota</taxon>
        <taxon>Herviviricetes</taxon>
        <taxon>Herpesvirales</taxon>
        <taxon>Orthoherpesviridae</taxon>
        <taxon>Gammaherpesvirinae</taxon>
        <taxon>Lymphocryptovirus</taxon>
        <taxon>Lymphocryptovirus humangamma4</taxon>
    </lineage>
</organism>
<organismHost>
    <name type="scientific">Homo sapiens</name>
    <name type="common">Human</name>
    <dbReference type="NCBI Taxonomy" id="9606"/>
</organismHost>
<sequence length="1128" mass="123034">MQGAQTSEDNLGSQSQPGPCGYIYFYPLATYPLREVATLGTGYAGHRCLTVPLLCGITVEPGFSINVKALHRRPDPNCGLLRATSYHRDIYVFHNAHMVPPIFEGPGLEALCGETREVFGYDAYSALPRESSKPGDFFPEGLDPSAYLGAVAITEAFKERLYSGNLVAIPSLKQEVAVGQSASVRVPLYDKEVFPEGVPQLRQFYNSDLSRCMHEALYTGLAQALRVRRVGKLVELLEKQSLQDQAKVAKVAPLKEFPASTISHPDSGALMIVDSAACELAVSYAPAMLEASHETPASLNYDSWPLFADCEGPEARVAALHRYNASLAPHVSTQIFATNSVLYVSGVSKSTGQGKESLFNSFYMTHGLGTLQEGTWDPCRRPCFSGWGGPDVTGTNGPGNYAVEHLVYAASFSPNLLARYAYYLQFCQGQKSSLTPVPETGSYVAGAAASPMCSLCEGRAPAVCLNTLFFRLRDRFPPVMSTQRRDPYVISGASGSYNETDFLGNFLNFIDKEDDGQRPDDEPRYTYWQLNQNLLERLSRLGIDAEGKLEKEPHGPRDFVKMFKDVDAAVDAEVVQFMNSMAKNNITYKDLVKSCYHVMQYSCNPFAQPACPIFTQLFYRSLLTILQDISLPICMCYENDNPGLGQSPPEWLKGHYQTLCTNFRSLAIDKGVLTAKEAKVVHGEPTCDLPDLDAALQGRLYGRRLPVRMSKVLMLCPRNIKIKNRVVFTGENAALQNSFIKSTTRRENYIINGPYMKFLNTYHKTLFPDTKLSSLYLWHNFSRRRSVPVPSGASAEEYSDLALFVDGGSRAHEESNVIDVVPGNLVTYAKQRLNNAILKACGQTQFYISLIQGLVPRTQSVPARDYPHVLGTRAVESAAAYAEATSSLTATTVVCAATDCLSQVCKARPVVTLPVTINKYTGVNGNNQIFQAGNLGYFMGRGVDRNLLQAPGAGLRKQAGGSSMRKKFVFATPTLGLTVKRRTQAATTYEIENIRAGLEAIISQKQEEDCVFDVVCNLVDAMGEACASLTRDDAEYLLGRFSVLADSVLETLATIASSGIEWTAGAARDFLEGVWGGPGAAQDNFISVAEPVGTASQASAGLLLGGGGQGSGGRRKRRLATVLPGLEV</sequence>
<proteinExistence type="inferred from homology"/>
<reference key="1">
    <citation type="journal article" date="2005" name="J. Virol.">
        <title>Genomic sequence analysis of Epstein-Barr virus strain GD1 from a nasopharyngeal carcinoma patient.</title>
        <authorList>
            <person name="Zeng M.-S."/>
            <person name="Li D.-J."/>
            <person name="Liu Q.-L."/>
            <person name="Song L.-B."/>
            <person name="Li M.-Z."/>
            <person name="Zhang R.-H."/>
            <person name="Yu X.-J."/>
            <person name="Wang H.-M."/>
            <person name="Ernberg I."/>
            <person name="Zeng Y.-X."/>
        </authorList>
    </citation>
    <scope>NUCLEOTIDE SEQUENCE [LARGE SCALE GENOMIC DNA]</scope>
</reference>